<proteinExistence type="inferred from homology"/>
<reference key="1">
    <citation type="journal article" date="2011" name="PLoS Genet.">
        <title>The evolution of host specialization in the vertebrate gut symbiont Lactobacillus reuteri.</title>
        <authorList>
            <person name="Frese S.A."/>
            <person name="Benson A.K."/>
            <person name="Tannock G.W."/>
            <person name="Loach D.M."/>
            <person name="Kim J."/>
            <person name="Zhang M."/>
            <person name="Oh P.L."/>
            <person name="Heng N.C."/>
            <person name="Patil P.B."/>
            <person name="Juge N."/>
            <person name="Mackenzie D.A."/>
            <person name="Pearson B.M."/>
            <person name="Lapidus A."/>
            <person name="Dalin E."/>
            <person name="Tice H."/>
            <person name="Goltsman E."/>
            <person name="Land M."/>
            <person name="Hauser L."/>
            <person name="Ivanova N."/>
            <person name="Kyrpides N.C."/>
            <person name="Walter J."/>
        </authorList>
    </citation>
    <scope>NUCLEOTIDE SEQUENCE [LARGE SCALE GENOMIC DNA]</scope>
    <source>
        <strain>DSM 20016</strain>
    </source>
</reference>
<evidence type="ECO:0000255" key="1">
    <source>
        <dbReference type="HAMAP-Rule" id="MF_01820"/>
    </source>
</evidence>
<evidence type="ECO:0000255" key="2">
    <source>
        <dbReference type="PROSITE-ProRule" id="PRU01058"/>
    </source>
</evidence>
<comment type="function">
    <text evidence="1">One of several proteins that assist in the late maturation steps of the functional core of the 30S ribosomal subunit. Helps release RbfA from mature subunits. May play a role in the assembly of ribosomal proteins into the subunit. Circularly permuted GTPase that catalyzes slow GTP hydrolysis, GTPase activity is stimulated by the 30S ribosomal subunit.</text>
</comment>
<comment type="cofactor">
    <cofactor evidence="1">
        <name>Zn(2+)</name>
        <dbReference type="ChEBI" id="CHEBI:29105"/>
    </cofactor>
    <text evidence="1">Binds 1 zinc ion per subunit.</text>
</comment>
<comment type="subunit">
    <text evidence="1">Monomer. Associates with 30S ribosomal subunit, binds 16S rRNA.</text>
</comment>
<comment type="subcellular location">
    <subcellularLocation>
        <location evidence="1">Cytoplasm</location>
    </subcellularLocation>
</comment>
<comment type="similarity">
    <text evidence="1">Belongs to the TRAFAC class YlqF/YawG GTPase family. RsgA subfamily.</text>
</comment>
<accession>A5VKQ1</accession>
<gene>
    <name evidence="1" type="primary">rsgA</name>
    <name type="ordered locus">Lreu_1168</name>
</gene>
<organism>
    <name type="scientific">Limosilactobacillus reuteri (strain DSM 20016)</name>
    <name type="common">Lactobacillus reuteri</name>
    <dbReference type="NCBI Taxonomy" id="557436"/>
    <lineage>
        <taxon>Bacteria</taxon>
        <taxon>Bacillati</taxon>
        <taxon>Bacillota</taxon>
        <taxon>Bacilli</taxon>
        <taxon>Lactobacillales</taxon>
        <taxon>Lactobacillaceae</taxon>
        <taxon>Limosilactobacillus</taxon>
    </lineage>
</organism>
<name>RSGA_LIMRD</name>
<keyword id="KW-0963">Cytoplasm</keyword>
<keyword id="KW-0342">GTP-binding</keyword>
<keyword id="KW-0378">Hydrolase</keyword>
<keyword id="KW-0479">Metal-binding</keyword>
<keyword id="KW-0547">Nucleotide-binding</keyword>
<keyword id="KW-1185">Reference proteome</keyword>
<keyword id="KW-0690">Ribosome biogenesis</keyword>
<keyword id="KW-0694">RNA-binding</keyword>
<keyword id="KW-0699">rRNA-binding</keyword>
<keyword id="KW-0862">Zinc</keyword>
<sequence length="296" mass="33257">MKTGIIQQSLSGFYDVIADEKIYRTRARGNFRQRKIKPVVGDHVEFSAENQQEGYLLKILPRRNQLVRPPVANVDMAVVVTSAKEPAFSANLLDRQLIALEAQDVTPLIYFSKTDLLTDDEYQQLLPTIEGYRKIGYQVYAAREPFDSDQLANLMEGLKGNIVTMMGQTGAGKSTLLNHLAPQLKLATGEISQALQRGRHTTRKVSLLDVNGALIADTPGFSSYETFDMTVNDLPQLFPEMAKISADCKFRGCLHIKEPQCAVKEAVNNGIIMKSRYNDYLQFHELIANQKPNYKK</sequence>
<protein>
    <recommendedName>
        <fullName evidence="1">Small ribosomal subunit biogenesis GTPase RsgA</fullName>
        <ecNumber evidence="1">3.6.1.-</ecNumber>
    </recommendedName>
</protein>
<feature type="chain" id="PRO_1000188094" description="Small ribosomal subunit biogenesis GTPase RsgA">
    <location>
        <begin position="1"/>
        <end position="296"/>
    </location>
</feature>
<feature type="domain" description="CP-type G" evidence="2">
    <location>
        <begin position="63"/>
        <end position="224"/>
    </location>
</feature>
<feature type="binding site" evidence="1">
    <location>
        <begin position="112"/>
        <end position="115"/>
    </location>
    <ligand>
        <name>GTP</name>
        <dbReference type="ChEBI" id="CHEBI:37565"/>
    </ligand>
</feature>
<feature type="binding site" evidence="1">
    <location>
        <begin position="167"/>
        <end position="175"/>
    </location>
    <ligand>
        <name>GTP</name>
        <dbReference type="ChEBI" id="CHEBI:37565"/>
    </ligand>
</feature>
<feature type="binding site" evidence="1">
    <location>
        <position position="248"/>
    </location>
    <ligand>
        <name>Zn(2+)</name>
        <dbReference type="ChEBI" id="CHEBI:29105"/>
    </ligand>
</feature>
<feature type="binding site" evidence="1">
    <location>
        <position position="253"/>
    </location>
    <ligand>
        <name>Zn(2+)</name>
        <dbReference type="ChEBI" id="CHEBI:29105"/>
    </ligand>
</feature>
<feature type="binding site" evidence="1">
    <location>
        <position position="255"/>
    </location>
    <ligand>
        <name>Zn(2+)</name>
        <dbReference type="ChEBI" id="CHEBI:29105"/>
    </ligand>
</feature>
<feature type="binding site" evidence="1">
    <location>
        <position position="261"/>
    </location>
    <ligand>
        <name>Zn(2+)</name>
        <dbReference type="ChEBI" id="CHEBI:29105"/>
    </ligand>
</feature>
<dbReference type="EC" id="3.6.1.-" evidence="1"/>
<dbReference type="EMBL" id="CP000705">
    <property type="protein sequence ID" value="ABQ83425.1"/>
    <property type="molecule type" value="Genomic_DNA"/>
</dbReference>
<dbReference type="RefSeq" id="WP_003668384.1">
    <property type="nucleotide sequence ID" value="NC_009513.1"/>
</dbReference>
<dbReference type="SMR" id="A5VKQ1"/>
<dbReference type="STRING" id="557436.Lreu_1168"/>
<dbReference type="KEGG" id="lre:Lreu_1168"/>
<dbReference type="PATRIC" id="fig|557436.17.peg.34"/>
<dbReference type="eggNOG" id="COG1162">
    <property type="taxonomic scope" value="Bacteria"/>
</dbReference>
<dbReference type="HOGENOM" id="CLU_033617_2_1_9"/>
<dbReference type="OMA" id="CLVAAYD"/>
<dbReference type="Proteomes" id="UP000001991">
    <property type="component" value="Chromosome"/>
</dbReference>
<dbReference type="GO" id="GO:0005737">
    <property type="term" value="C:cytoplasm"/>
    <property type="evidence" value="ECO:0007669"/>
    <property type="project" value="UniProtKB-SubCell"/>
</dbReference>
<dbReference type="GO" id="GO:0005525">
    <property type="term" value="F:GTP binding"/>
    <property type="evidence" value="ECO:0007669"/>
    <property type="project" value="UniProtKB-UniRule"/>
</dbReference>
<dbReference type="GO" id="GO:0003924">
    <property type="term" value="F:GTPase activity"/>
    <property type="evidence" value="ECO:0007669"/>
    <property type="project" value="UniProtKB-UniRule"/>
</dbReference>
<dbReference type="GO" id="GO:0046872">
    <property type="term" value="F:metal ion binding"/>
    <property type="evidence" value="ECO:0007669"/>
    <property type="project" value="UniProtKB-KW"/>
</dbReference>
<dbReference type="GO" id="GO:0019843">
    <property type="term" value="F:rRNA binding"/>
    <property type="evidence" value="ECO:0007669"/>
    <property type="project" value="UniProtKB-KW"/>
</dbReference>
<dbReference type="GO" id="GO:0042274">
    <property type="term" value="P:ribosomal small subunit biogenesis"/>
    <property type="evidence" value="ECO:0007669"/>
    <property type="project" value="UniProtKB-UniRule"/>
</dbReference>
<dbReference type="CDD" id="cd04466">
    <property type="entry name" value="S1_YloQ_GTPase"/>
    <property type="match status" value="1"/>
</dbReference>
<dbReference type="CDD" id="cd01854">
    <property type="entry name" value="YjeQ_EngC"/>
    <property type="match status" value="1"/>
</dbReference>
<dbReference type="Gene3D" id="2.40.50.140">
    <property type="entry name" value="Nucleic acid-binding proteins"/>
    <property type="match status" value="1"/>
</dbReference>
<dbReference type="Gene3D" id="3.40.50.300">
    <property type="entry name" value="P-loop containing nucleotide triphosphate hydrolases"/>
    <property type="match status" value="1"/>
</dbReference>
<dbReference type="Gene3D" id="1.10.40.50">
    <property type="entry name" value="Probable gtpase engc, domain 3"/>
    <property type="match status" value="1"/>
</dbReference>
<dbReference type="HAMAP" id="MF_01820">
    <property type="entry name" value="GTPase_RsgA"/>
    <property type="match status" value="1"/>
</dbReference>
<dbReference type="InterPro" id="IPR030378">
    <property type="entry name" value="G_CP_dom"/>
</dbReference>
<dbReference type="InterPro" id="IPR012340">
    <property type="entry name" value="NA-bd_OB-fold"/>
</dbReference>
<dbReference type="InterPro" id="IPR027417">
    <property type="entry name" value="P-loop_NTPase"/>
</dbReference>
<dbReference type="InterPro" id="IPR004881">
    <property type="entry name" value="Ribosome_biogen_GTPase_RsgA"/>
</dbReference>
<dbReference type="InterPro" id="IPR010914">
    <property type="entry name" value="RsgA_GTPase_dom"/>
</dbReference>
<dbReference type="InterPro" id="IPR031944">
    <property type="entry name" value="RsgA_N"/>
</dbReference>
<dbReference type="NCBIfam" id="TIGR00157">
    <property type="entry name" value="ribosome small subunit-dependent GTPase A"/>
    <property type="match status" value="1"/>
</dbReference>
<dbReference type="PANTHER" id="PTHR32120">
    <property type="entry name" value="SMALL RIBOSOMAL SUBUNIT BIOGENESIS GTPASE RSGA"/>
    <property type="match status" value="1"/>
</dbReference>
<dbReference type="PANTHER" id="PTHR32120:SF11">
    <property type="entry name" value="SMALL RIBOSOMAL SUBUNIT BIOGENESIS GTPASE RSGA 1, MITOCHONDRIAL-RELATED"/>
    <property type="match status" value="1"/>
</dbReference>
<dbReference type="Pfam" id="PF03193">
    <property type="entry name" value="RsgA_GTPase"/>
    <property type="match status" value="1"/>
</dbReference>
<dbReference type="Pfam" id="PF16745">
    <property type="entry name" value="RsgA_N"/>
    <property type="match status" value="1"/>
</dbReference>
<dbReference type="SUPFAM" id="SSF50249">
    <property type="entry name" value="Nucleic acid-binding proteins"/>
    <property type="match status" value="1"/>
</dbReference>
<dbReference type="SUPFAM" id="SSF52540">
    <property type="entry name" value="P-loop containing nucleoside triphosphate hydrolases"/>
    <property type="match status" value="1"/>
</dbReference>
<dbReference type="PROSITE" id="PS50936">
    <property type="entry name" value="ENGC_GTPASE"/>
    <property type="match status" value="1"/>
</dbReference>
<dbReference type="PROSITE" id="PS51721">
    <property type="entry name" value="G_CP"/>
    <property type="match status" value="1"/>
</dbReference>